<reference key="1">
    <citation type="journal article" date="2010" name="Genome Biol. Evol.">
        <title>Continuing evolution of Burkholderia mallei through genome reduction and large-scale rearrangements.</title>
        <authorList>
            <person name="Losada L."/>
            <person name="Ronning C.M."/>
            <person name="DeShazer D."/>
            <person name="Woods D."/>
            <person name="Fedorova N."/>
            <person name="Kim H.S."/>
            <person name="Shabalina S.A."/>
            <person name="Pearson T.R."/>
            <person name="Brinkac L."/>
            <person name="Tan P."/>
            <person name="Nandi T."/>
            <person name="Crabtree J."/>
            <person name="Badger J."/>
            <person name="Beckstrom-Sternberg S."/>
            <person name="Saqib M."/>
            <person name="Schutzer S.E."/>
            <person name="Keim P."/>
            <person name="Nierman W.C."/>
        </authorList>
    </citation>
    <scope>NUCLEOTIDE SEQUENCE [LARGE SCALE GENOMIC DNA]</scope>
    <source>
        <strain>SAVP1</strain>
    </source>
</reference>
<keyword id="KW-0378">Hydrolase</keyword>
<keyword id="KW-0479">Metal-binding</keyword>
<keyword id="KW-0823">Tryptophan catabolism</keyword>
<keyword id="KW-0862">Zinc</keyword>
<dbReference type="EC" id="3.5.1.9" evidence="1"/>
<dbReference type="EMBL" id="CP000526">
    <property type="protein sequence ID" value="ABM52958.1"/>
    <property type="molecule type" value="Genomic_DNA"/>
</dbReference>
<dbReference type="RefSeq" id="WP_004198883.1">
    <property type="nucleotide sequence ID" value="NC_008785.1"/>
</dbReference>
<dbReference type="SMR" id="A1V195"/>
<dbReference type="GeneID" id="92978123"/>
<dbReference type="KEGG" id="bmv:BMASAVP1_A0652"/>
<dbReference type="HOGENOM" id="CLU_030671_3_1_4"/>
<dbReference type="UniPathway" id="UPA00333">
    <property type="reaction ID" value="UER00454"/>
</dbReference>
<dbReference type="GO" id="GO:0004061">
    <property type="term" value="F:arylformamidase activity"/>
    <property type="evidence" value="ECO:0000250"/>
    <property type="project" value="UniProtKB"/>
</dbReference>
<dbReference type="GO" id="GO:0004328">
    <property type="term" value="F:formamidase activity"/>
    <property type="evidence" value="ECO:0007669"/>
    <property type="project" value="InterPro"/>
</dbReference>
<dbReference type="GO" id="GO:0008270">
    <property type="term" value="F:zinc ion binding"/>
    <property type="evidence" value="ECO:0007669"/>
    <property type="project" value="UniProtKB-UniRule"/>
</dbReference>
<dbReference type="GO" id="GO:0043420">
    <property type="term" value="P:anthranilate metabolic process"/>
    <property type="evidence" value="ECO:0000250"/>
    <property type="project" value="UniProtKB"/>
</dbReference>
<dbReference type="GO" id="GO:0019441">
    <property type="term" value="P:L-tryptophan catabolic process to kynurenine"/>
    <property type="evidence" value="ECO:0000250"/>
    <property type="project" value="UniProtKB"/>
</dbReference>
<dbReference type="FunFam" id="3.50.30.50:FF:000001">
    <property type="entry name" value="Kynurenine formamidase"/>
    <property type="match status" value="1"/>
</dbReference>
<dbReference type="Gene3D" id="3.50.30.50">
    <property type="entry name" value="Putative cyclase"/>
    <property type="match status" value="1"/>
</dbReference>
<dbReference type="HAMAP" id="MF_01969">
    <property type="entry name" value="KynB"/>
    <property type="match status" value="1"/>
</dbReference>
<dbReference type="InterPro" id="IPR007325">
    <property type="entry name" value="KFase/CYL"/>
</dbReference>
<dbReference type="InterPro" id="IPR037175">
    <property type="entry name" value="KFase_sf"/>
</dbReference>
<dbReference type="InterPro" id="IPR017484">
    <property type="entry name" value="Kynurenine_formamidase_bac"/>
</dbReference>
<dbReference type="NCBIfam" id="TIGR03035">
    <property type="entry name" value="trp_arylform"/>
    <property type="match status" value="1"/>
</dbReference>
<dbReference type="PANTHER" id="PTHR31118">
    <property type="entry name" value="CYCLASE-LIKE PROTEIN 2"/>
    <property type="match status" value="1"/>
</dbReference>
<dbReference type="PANTHER" id="PTHR31118:SF32">
    <property type="entry name" value="KYNURENINE FORMAMIDASE"/>
    <property type="match status" value="1"/>
</dbReference>
<dbReference type="Pfam" id="PF04199">
    <property type="entry name" value="Cyclase"/>
    <property type="match status" value="1"/>
</dbReference>
<dbReference type="SUPFAM" id="SSF102198">
    <property type="entry name" value="Putative cyclase"/>
    <property type="match status" value="1"/>
</dbReference>
<proteinExistence type="inferred from homology"/>
<sequence length="213" mass="22682">MDTIWDISPPIAPATPVWPGDTPVGIERVWRIEAGSPVNVARVTLSPHTGAHADAPLHYDADGTPIGAVPLDAYLGRCRVIHCIGARSAVTPEHVRAALAGAPPRVLLRTYGQAPQHAWDSAFCAVAPETIDLLAAHGVRLVGIDTPSLDPQESKTMDAHRRIRAHRMAILEGLVLDEIAAGDYELIALPLKFATLDASPVRAVLRALPAAPR</sequence>
<accession>A1V195</accession>
<gene>
    <name evidence="1" type="primary">kynB</name>
    <name type="ordered locus">BMASAVP1_A0652</name>
</gene>
<evidence type="ECO:0000255" key="1">
    <source>
        <dbReference type="HAMAP-Rule" id="MF_01969"/>
    </source>
</evidence>
<name>KYNB_BURMS</name>
<organism>
    <name type="scientific">Burkholderia mallei (strain SAVP1)</name>
    <dbReference type="NCBI Taxonomy" id="320388"/>
    <lineage>
        <taxon>Bacteria</taxon>
        <taxon>Pseudomonadati</taxon>
        <taxon>Pseudomonadota</taxon>
        <taxon>Betaproteobacteria</taxon>
        <taxon>Burkholderiales</taxon>
        <taxon>Burkholderiaceae</taxon>
        <taxon>Burkholderia</taxon>
        <taxon>pseudomallei group</taxon>
    </lineage>
</organism>
<feature type="chain" id="PRO_0000362109" description="Kynurenine formamidase">
    <location>
        <begin position="1"/>
        <end position="213"/>
    </location>
</feature>
<feature type="active site" description="Proton donor/acceptor" evidence="1">
    <location>
        <position position="58"/>
    </location>
</feature>
<feature type="binding site" evidence="1">
    <location>
        <position position="18"/>
    </location>
    <ligand>
        <name>substrate</name>
    </ligand>
</feature>
<feature type="binding site" evidence="1">
    <location>
        <position position="48"/>
    </location>
    <ligand>
        <name>Zn(2+)</name>
        <dbReference type="ChEBI" id="CHEBI:29105"/>
        <label>1</label>
    </ligand>
</feature>
<feature type="binding site" evidence="1">
    <location>
        <position position="52"/>
    </location>
    <ligand>
        <name>Zn(2+)</name>
        <dbReference type="ChEBI" id="CHEBI:29105"/>
        <label>1</label>
    </ligand>
</feature>
<feature type="binding site" evidence="1">
    <location>
        <position position="54"/>
    </location>
    <ligand>
        <name>Zn(2+)</name>
        <dbReference type="ChEBI" id="CHEBI:29105"/>
        <label>1</label>
    </ligand>
</feature>
<feature type="binding site" evidence="1">
    <location>
        <position position="54"/>
    </location>
    <ligand>
        <name>Zn(2+)</name>
        <dbReference type="ChEBI" id="CHEBI:29105"/>
        <label>2</label>
    </ligand>
</feature>
<feature type="binding site" evidence="1">
    <location>
        <position position="160"/>
    </location>
    <ligand>
        <name>Zn(2+)</name>
        <dbReference type="ChEBI" id="CHEBI:29105"/>
        <label>2</label>
    </ligand>
</feature>
<feature type="binding site" evidence="1">
    <location>
        <position position="172"/>
    </location>
    <ligand>
        <name>Zn(2+)</name>
        <dbReference type="ChEBI" id="CHEBI:29105"/>
        <label>1</label>
    </ligand>
</feature>
<feature type="binding site" evidence="1">
    <location>
        <position position="172"/>
    </location>
    <ligand>
        <name>Zn(2+)</name>
        <dbReference type="ChEBI" id="CHEBI:29105"/>
        <label>2</label>
    </ligand>
</feature>
<comment type="function">
    <text evidence="1">Catalyzes the hydrolysis of N-formyl-L-kynurenine to L-kynurenine, the second step in the kynurenine pathway of tryptophan degradation.</text>
</comment>
<comment type="catalytic activity">
    <reaction evidence="1">
        <text>N-formyl-L-kynurenine + H2O = L-kynurenine + formate + H(+)</text>
        <dbReference type="Rhea" id="RHEA:13009"/>
        <dbReference type="ChEBI" id="CHEBI:15377"/>
        <dbReference type="ChEBI" id="CHEBI:15378"/>
        <dbReference type="ChEBI" id="CHEBI:15740"/>
        <dbReference type="ChEBI" id="CHEBI:57959"/>
        <dbReference type="ChEBI" id="CHEBI:58629"/>
        <dbReference type="EC" id="3.5.1.9"/>
    </reaction>
</comment>
<comment type="cofactor">
    <cofactor evidence="1">
        <name>Zn(2+)</name>
        <dbReference type="ChEBI" id="CHEBI:29105"/>
    </cofactor>
    <text evidence="1">Binds 2 zinc ions per subunit.</text>
</comment>
<comment type="pathway">
    <text evidence="1">Amino-acid degradation; L-tryptophan degradation via kynurenine pathway; L-kynurenine from L-tryptophan: step 2/2.</text>
</comment>
<comment type="subunit">
    <text evidence="1">Homodimer.</text>
</comment>
<comment type="similarity">
    <text evidence="1">Belongs to the Cyclase 1 superfamily. KynB family.</text>
</comment>
<protein>
    <recommendedName>
        <fullName evidence="1">Kynurenine formamidase</fullName>
        <shortName evidence="1">KFA</shortName>
        <shortName evidence="1">KFase</shortName>
        <ecNumber evidence="1">3.5.1.9</ecNumber>
    </recommendedName>
    <alternativeName>
        <fullName evidence="1">Arylformamidase</fullName>
    </alternativeName>
    <alternativeName>
        <fullName evidence="1">N-formylkynurenine formamidase</fullName>
        <shortName evidence="1">FKF</shortName>
    </alternativeName>
</protein>